<reference key="1">
    <citation type="journal article" date="2016" name="Microb. Biotechnol.">
        <title>Ustilago maydis produces itaconic acid via the unusual intermediate trans-aconitate.</title>
        <authorList>
            <person name="Geiser E."/>
            <person name="Przybilla S.K."/>
            <person name="Friedrich A."/>
            <person name="Buckel W."/>
            <person name="Wierckx N."/>
            <person name="Blank L.M."/>
            <person name="Boelker M."/>
        </authorList>
    </citation>
    <scope>NUCLEOTIDE SEQUENCE [GENOMIC DNA]</scope>
    <scope>FUNCTION</scope>
    <scope>DISRUPTION PHENOTYPE</scope>
    <scope>SUBCELLULAR LOCATION</scope>
    <source>
        <strain>MB215</strain>
    </source>
</reference>
<reference key="2">
    <citation type="journal article" date="2016" name="Metab. Eng.">
        <title>Genetic and biochemical insights into the itaconate pathway of Ustilago maydis enable enhanced production.</title>
        <authorList>
            <person name="Geiser E."/>
            <person name="Przybilla S.K."/>
            <person name="Engel M."/>
            <person name="Kleineberg W."/>
            <person name="Buettner L."/>
            <person name="Sarikaya E."/>
            <person name="Hartog T.D."/>
            <person name="Klankermayer J."/>
            <person name="Leitner W."/>
            <person name="Boelker M."/>
            <person name="Blank L.M."/>
            <person name="Wierckx N."/>
        </authorList>
    </citation>
    <scope>FUNCTION</scope>
</reference>
<comment type="function">
    <text evidence="3 4">Mitochondrial tricarboxylate transporter; part of the gene cluster that mediates the biosynthesis of itaconic acid and 2-hydroxyparaconate (PubMed:26639528, PubMed:27750034). Cis-aconitate is secreted by the mitochondrial tricarboxylate transporter MTT1 (PubMed:26639528). In the cytosol cis-aconitate is converted into trans-aconitate via isomerization by the aconitate-delta-isomerase ADI1 (PubMed:26639528). Decarboxylation of trans-aconitate by the trans-aconitate decarboxylase TAD1 then leads then to the production of itaconic acid (PubMed:26639528). The cytochrome P450 monooxygenase CYP3 further converts itaconate to 2-hydroxyparaconate via oxidation of the double bond, leading to a transient epoxide, which can subsequently be lactonized to produce 2-hydroxyparaconate (PubMed:27750034). Secretion of itaconate and possibly 2-hydroxyparaconate into the medium is mediated by the major facilitator ITP1 (PubMed:26639528, PubMed:27750034). The glyoxalase domain-containing protein RDO1 is not involved in the biosynthesis of itaconate and 2-hydroxyparaconate, however, it might play a role in the further conversion of 2-hydroxyparaconate to itatartarate (PubMed:27750034).</text>
</comment>
<comment type="subcellular location">
    <subcellularLocation>
        <location evidence="3">Mitochondrion membrane</location>
        <topology evidence="1">Multi-pass membrane protein</topology>
    </subcellularLocation>
</comment>
<comment type="disruption phenotype">
    <text evidence="3">Decreases the production of itaconic acid (PubMed:26639528).</text>
</comment>
<comment type="similarity">
    <text evidence="6">Belongs to the mitochondrial carrier (TC 2.A.29) family.</text>
</comment>
<name>MTT1_MYCMD</name>
<dbReference type="EMBL" id="KT852988">
    <property type="protein sequence ID" value="ALS30799.1"/>
    <property type="molecule type" value="Genomic_DNA"/>
</dbReference>
<dbReference type="RefSeq" id="XP_011388156.1">
    <property type="nucleotide sequence ID" value="XM_011389854.1"/>
</dbReference>
<dbReference type="SMR" id="A0A0U2IR85"/>
<dbReference type="GeneID" id="23565067"/>
<dbReference type="KEGG" id="uma:UMAG_05079"/>
<dbReference type="VEuPathDB" id="FungiDB:UMAG_05079"/>
<dbReference type="OMA" id="DSAKKWM"/>
<dbReference type="BioCyc" id="MetaCyc:MONOMER-20621"/>
<dbReference type="GO" id="GO:0031966">
    <property type="term" value="C:mitochondrial membrane"/>
    <property type="evidence" value="ECO:0007669"/>
    <property type="project" value="UniProtKB-SubCell"/>
</dbReference>
<dbReference type="GO" id="GO:0055085">
    <property type="term" value="P:transmembrane transport"/>
    <property type="evidence" value="ECO:0007669"/>
    <property type="project" value="InterPro"/>
</dbReference>
<dbReference type="FunFam" id="1.50.40.10:FF:000007">
    <property type="entry name" value="Mitochondrial tricarboxylate transport protein-like"/>
    <property type="match status" value="1"/>
</dbReference>
<dbReference type="Gene3D" id="1.50.40.10">
    <property type="entry name" value="Mitochondrial carrier domain"/>
    <property type="match status" value="1"/>
</dbReference>
<dbReference type="InterPro" id="IPR002067">
    <property type="entry name" value="Mit_carrier"/>
</dbReference>
<dbReference type="InterPro" id="IPR018108">
    <property type="entry name" value="Mitochondrial_sb/sol_carrier"/>
</dbReference>
<dbReference type="InterPro" id="IPR023395">
    <property type="entry name" value="Mt_carrier_dom_sf"/>
</dbReference>
<dbReference type="InterPro" id="IPR049563">
    <property type="entry name" value="TXTP-like"/>
</dbReference>
<dbReference type="PANTHER" id="PTHR45788">
    <property type="entry name" value="SUCCINATE/FUMARATE MITOCHONDRIAL TRANSPORTER-RELATED"/>
    <property type="match status" value="1"/>
</dbReference>
<dbReference type="PANTHER" id="PTHR45788:SF4">
    <property type="entry name" value="TRICARBOXYLATE TRANSPORT PROTEIN, MITOCHONDRIAL"/>
    <property type="match status" value="1"/>
</dbReference>
<dbReference type="Pfam" id="PF00153">
    <property type="entry name" value="Mito_carr"/>
    <property type="match status" value="3"/>
</dbReference>
<dbReference type="PRINTS" id="PR00926">
    <property type="entry name" value="MITOCARRIER"/>
</dbReference>
<dbReference type="SUPFAM" id="SSF103506">
    <property type="entry name" value="Mitochondrial carrier"/>
    <property type="match status" value="1"/>
</dbReference>
<dbReference type="PROSITE" id="PS50920">
    <property type="entry name" value="SOLCAR"/>
    <property type="match status" value="3"/>
</dbReference>
<proteinExistence type="inferred from homology"/>
<feature type="chain" id="PRO_0000438674" description="Mitochondrial tricarboxylate transporter 1">
    <location>
        <begin position="1"/>
        <end position="300"/>
    </location>
</feature>
<feature type="transmembrane region" description="Helical; Name=1" evidence="1">
    <location>
        <begin position="11"/>
        <end position="31"/>
    </location>
</feature>
<feature type="transmembrane region" description="Helical; Name=2" evidence="1">
    <location>
        <begin position="67"/>
        <end position="87"/>
    </location>
</feature>
<feature type="transmembrane region" description="Helical; Name=3" evidence="1">
    <location>
        <begin position="114"/>
        <end position="134"/>
    </location>
</feature>
<feature type="transmembrane region" description="Helical; Name=4" evidence="1">
    <location>
        <begin position="172"/>
        <end position="191"/>
    </location>
</feature>
<feature type="transmembrane region" description="Helical; Name=5" evidence="1">
    <location>
        <begin position="208"/>
        <end position="228"/>
    </location>
</feature>
<feature type="transmembrane region" description="Helical; Name=6" evidence="1">
    <location>
        <begin position="277"/>
        <end position="297"/>
    </location>
</feature>
<feature type="repeat" description="Solcar 1" evidence="2">
    <location>
        <begin position="8"/>
        <end position="98"/>
    </location>
</feature>
<feature type="repeat" description="Solcar 2" evidence="2">
    <location>
        <begin position="107"/>
        <end position="197"/>
    </location>
</feature>
<feature type="repeat" description="Solcar 3" evidence="2">
    <location>
        <begin position="209"/>
        <end position="294"/>
    </location>
</feature>
<accession>A0A0U2IR85</accession>
<sequence>MPPSGRKVSPSVSVVAGATAGAVEGVATFPIEYLKTVSQFAPRDVHGNQQRLSPIEVVRSTLQKEGPKGLFRGCTAMVVGNAGKAGVRFFAFENFRSMLKNKSTGKLSNSSNYLAGMGAGTLEAIFAVTPSETIKTKLIDDSKRAKPRYEQGLVRGTASIVRQEGLAGIYQGVVPVVMRQGSASAIRLGTYSALRDWLPKAHGSGSSLINWLATFSIGAASGVVAVYGTMPFDVLKTRMQAIDAARYRSTWHCLTNTLKTEGAAALWRGSVSRSMRLIVSGGVIFSVYEQVVWLLAGPES</sequence>
<organism>
    <name type="scientific">Mycosarcoma maydis</name>
    <name type="common">Corn smut fungus</name>
    <name type="synonym">Ustilago maydis</name>
    <dbReference type="NCBI Taxonomy" id="5270"/>
    <lineage>
        <taxon>Eukaryota</taxon>
        <taxon>Fungi</taxon>
        <taxon>Dikarya</taxon>
        <taxon>Basidiomycota</taxon>
        <taxon>Ustilaginomycotina</taxon>
        <taxon>Ustilaginomycetes</taxon>
        <taxon>Ustilaginales</taxon>
        <taxon>Ustilaginaceae</taxon>
        <taxon>Mycosarcoma</taxon>
    </lineage>
</organism>
<protein>
    <recommendedName>
        <fullName evidence="5">Mitochondrial tricarboxylate transporter 1</fullName>
    </recommendedName>
    <alternativeName>
        <fullName evidence="6">Itaconic acid/2-hydroxyparaconate biosynthesis cluster protein MTT1</fullName>
    </alternativeName>
</protein>
<gene>
    <name evidence="5" type="primary">MTT1</name>
    <name type="ORF">UMAG_05079</name>
</gene>
<evidence type="ECO:0000255" key="1"/>
<evidence type="ECO:0000255" key="2">
    <source>
        <dbReference type="PROSITE-ProRule" id="PRU00282"/>
    </source>
</evidence>
<evidence type="ECO:0000269" key="3">
    <source>
    </source>
</evidence>
<evidence type="ECO:0000269" key="4">
    <source>
    </source>
</evidence>
<evidence type="ECO:0000303" key="5">
    <source>
    </source>
</evidence>
<evidence type="ECO:0000305" key="6"/>
<keyword id="KW-0472">Membrane</keyword>
<keyword id="KW-0496">Mitochondrion</keyword>
<keyword id="KW-0677">Repeat</keyword>
<keyword id="KW-0812">Transmembrane</keyword>
<keyword id="KW-1133">Transmembrane helix</keyword>
<keyword id="KW-0813">Transport</keyword>